<reference key="1">
    <citation type="journal article" date="1993" name="J. Ferment. Bioeng.">
        <title>Cloning, sequence and overexpression of the thermophilic cyanobacterium gene for the ribulose-1,5-bisphosphate carboxylase/oxygenase.</title>
        <authorList>
            <person name="Yaguchi T."/>
            <person name="Chung S."/>
            <person name="Igarashi Y."/>
            <person name="Kodama T."/>
        </authorList>
    </citation>
    <scope>NUCLEOTIDE SEQUENCE [GENOMIC DNA]</scope>
    <scope>EXPRESSION IN E.COLI</scope>
    <source>
        <strain>a-1</strain>
    </source>
</reference>
<evidence type="ECO:0000255" key="1">
    <source>
        <dbReference type="HAMAP-Rule" id="MF_01338"/>
    </source>
</evidence>
<evidence type="ECO:0000305" key="2"/>
<sequence>MAYTQSKSQKVGYQAGVKDYRLTYYTPDYTPKDTDILAAFRVTPQPGVPFEEAAAAVAAESSTGTWTTVWTDLLTDLDRYKGRCYDIEPLPGEDNQFIAYIAYPLDLFEEGSVTNMLTSIVGNVFGFKALKALRLEDLRIPVAYLKTFQGPPHGIQVERDKLNKYGRPLLGCTIKPKLGLSAKNYGRAVYECLRGGLDFTKDDENINSQPFQRWRDRFLFVADAIHKAQAETGEIKGHYLNVTAPTCEEMLKRAEFAKDWNAIIMHDFLTAGFTANTTLSKGCRDNGMLLHIHRAMHAVMDRQKNHGIHFRVLAKCLRMSGGDHIHTGTVVGKLEGDKAVTLGFVDLLRENYIEQDRSRGIYFTQDWASMPGVMAVASGGIHVWHMPALVDIFGDDAVLQFGGGTLGHPWGNAPGATANRVALEACIQARNEGRDLMREGGDIIREAARWSPELAAACELWKEIKFEFEAQDTI</sequence>
<organism>
    <name type="scientific">Synechococcus sp</name>
    <dbReference type="NCBI Taxonomy" id="1131"/>
    <lineage>
        <taxon>Bacteria</taxon>
        <taxon>Bacillati</taxon>
        <taxon>Cyanobacteriota</taxon>
        <taxon>Cyanophyceae</taxon>
        <taxon>Synechococcales</taxon>
        <taxon>Synechococcaceae</taxon>
        <taxon>Synechococcus</taxon>
    </lineage>
</organism>
<protein>
    <recommendedName>
        <fullName evidence="1">Ribulose bisphosphate carboxylase large chain</fullName>
        <shortName evidence="1">RuBisCO large subunit</shortName>
        <ecNumber evidence="1">4.1.1.39</ecNumber>
    </recommendedName>
</protein>
<feature type="chain" id="PRO_0000062654" description="Ribulose bisphosphate carboxylase large chain">
    <location>
        <begin position="1"/>
        <end position="474"/>
    </location>
</feature>
<feature type="active site" description="Proton acceptor" evidence="1">
    <location>
        <position position="175"/>
    </location>
</feature>
<feature type="active site" description="Proton acceptor" evidence="1">
    <location>
        <position position="293"/>
    </location>
</feature>
<feature type="binding site" description="in homodimeric partner" evidence="1">
    <location>
        <position position="123"/>
    </location>
    <ligand>
        <name>substrate</name>
    </ligand>
</feature>
<feature type="binding site" evidence="1">
    <location>
        <position position="173"/>
    </location>
    <ligand>
        <name>substrate</name>
    </ligand>
</feature>
<feature type="binding site" evidence="1">
    <location>
        <position position="177"/>
    </location>
    <ligand>
        <name>substrate</name>
    </ligand>
</feature>
<feature type="binding site" description="via carbamate group" evidence="1">
    <location>
        <position position="201"/>
    </location>
    <ligand>
        <name>Mg(2+)</name>
        <dbReference type="ChEBI" id="CHEBI:18420"/>
    </ligand>
</feature>
<feature type="binding site" evidence="1">
    <location>
        <position position="203"/>
    </location>
    <ligand>
        <name>Mg(2+)</name>
        <dbReference type="ChEBI" id="CHEBI:18420"/>
    </ligand>
</feature>
<feature type="binding site" evidence="1">
    <location>
        <position position="204"/>
    </location>
    <ligand>
        <name>Mg(2+)</name>
        <dbReference type="ChEBI" id="CHEBI:18420"/>
    </ligand>
</feature>
<feature type="binding site" evidence="1">
    <location>
        <position position="294"/>
    </location>
    <ligand>
        <name>substrate</name>
    </ligand>
</feature>
<feature type="binding site" evidence="1">
    <location>
        <position position="326"/>
    </location>
    <ligand>
        <name>substrate</name>
    </ligand>
</feature>
<feature type="binding site" evidence="1">
    <location>
        <position position="378"/>
    </location>
    <ligand>
        <name>substrate</name>
    </ligand>
</feature>
<feature type="site" description="Transition state stabilizer" evidence="1">
    <location>
        <position position="333"/>
    </location>
</feature>
<feature type="modified residue" description="N6-carboxylysine" evidence="1">
    <location>
        <position position="201"/>
    </location>
</feature>
<feature type="disulfide bond" description="Interchain; in linked form" evidence="1">
    <location>
        <position position="247"/>
    </location>
</feature>
<accession>Q02518</accession>
<gene>
    <name evidence="1" type="primary">cbbL</name>
    <name evidence="1" type="synonym">rbcL</name>
</gene>
<keyword id="KW-1283">Bacterial microcompartment</keyword>
<keyword id="KW-0113">Calvin cycle</keyword>
<keyword id="KW-0120">Carbon dioxide fixation</keyword>
<keyword id="KW-1282">Carboxysome</keyword>
<keyword id="KW-1015">Disulfide bond</keyword>
<keyword id="KW-0456">Lyase</keyword>
<keyword id="KW-0460">Magnesium</keyword>
<keyword id="KW-0479">Metal-binding</keyword>
<keyword id="KW-0503">Monooxygenase</keyword>
<keyword id="KW-0560">Oxidoreductase</keyword>
<keyword id="KW-0601">Photorespiration</keyword>
<keyword id="KW-0602">Photosynthesis</keyword>
<dbReference type="EC" id="4.1.1.39" evidence="1"/>
<dbReference type="EMBL" id="D13539">
    <property type="protein sequence ID" value="BAA39998.1"/>
    <property type="molecule type" value="Genomic_DNA"/>
</dbReference>
<dbReference type="SMR" id="Q02518"/>
<dbReference type="GO" id="GO:0031470">
    <property type="term" value="C:carboxysome"/>
    <property type="evidence" value="ECO:0007669"/>
    <property type="project" value="UniProtKB-SubCell"/>
</dbReference>
<dbReference type="GO" id="GO:0000287">
    <property type="term" value="F:magnesium ion binding"/>
    <property type="evidence" value="ECO:0007669"/>
    <property type="project" value="UniProtKB-UniRule"/>
</dbReference>
<dbReference type="GO" id="GO:0004497">
    <property type="term" value="F:monooxygenase activity"/>
    <property type="evidence" value="ECO:0007669"/>
    <property type="project" value="UniProtKB-KW"/>
</dbReference>
<dbReference type="GO" id="GO:0016984">
    <property type="term" value="F:ribulose-bisphosphate carboxylase activity"/>
    <property type="evidence" value="ECO:0007669"/>
    <property type="project" value="UniProtKB-UniRule"/>
</dbReference>
<dbReference type="GO" id="GO:0009853">
    <property type="term" value="P:photorespiration"/>
    <property type="evidence" value="ECO:0007669"/>
    <property type="project" value="UniProtKB-KW"/>
</dbReference>
<dbReference type="GO" id="GO:0019253">
    <property type="term" value="P:reductive pentose-phosphate cycle"/>
    <property type="evidence" value="ECO:0007669"/>
    <property type="project" value="UniProtKB-UniRule"/>
</dbReference>
<dbReference type="CDD" id="cd08212">
    <property type="entry name" value="RuBisCO_large_I"/>
    <property type="match status" value="1"/>
</dbReference>
<dbReference type="Gene3D" id="3.20.20.110">
    <property type="entry name" value="Ribulose bisphosphate carboxylase, large subunit, C-terminal domain"/>
    <property type="match status" value="1"/>
</dbReference>
<dbReference type="Gene3D" id="3.30.70.150">
    <property type="entry name" value="RuBisCO large subunit, N-terminal domain"/>
    <property type="match status" value="1"/>
</dbReference>
<dbReference type="HAMAP" id="MF_01338">
    <property type="entry name" value="RuBisCO_L_type1"/>
    <property type="match status" value="1"/>
</dbReference>
<dbReference type="InterPro" id="IPR033966">
    <property type="entry name" value="RuBisCO"/>
</dbReference>
<dbReference type="InterPro" id="IPR020878">
    <property type="entry name" value="RuBisCo_large_chain_AS"/>
</dbReference>
<dbReference type="InterPro" id="IPR000685">
    <property type="entry name" value="RuBisCO_lsu_C"/>
</dbReference>
<dbReference type="InterPro" id="IPR036376">
    <property type="entry name" value="RuBisCO_lsu_C_sf"/>
</dbReference>
<dbReference type="InterPro" id="IPR017443">
    <property type="entry name" value="RuBisCO_lsu_fd_N"/>
</dbReference>
<dbReference type="InterPro" id="IPR036422">
    <property type="entry name" value="RuBisCO_lsu_N_sf"/>
</dbReference>
<dbReference type="InterPro" id="IPR020888">
    <property type="entry name" value="RuBisCO_lsuI"/>
</dbReference>
<dbReference type="NCBIfam" id="NF003252">
    <property type="entry name" value="PRK04208.1"/>
    <property type="match status" value="1"/>
</dbReference>
<dbReference type="PANTHER" id="PTHR42704">
    <property type="entry name" value="RIBULOSE BISPHOSPHATE CARBOXYLASE"/>
    <property type="match status" value="1"/>
</dbReference>
<dbReference type="PANTHER" id="PTHR42704:SF17">
    <property type="entry name" value="RIBULOSE BISPHOSPHATE CARBOXYLASE LARGE CHAIN"/>
    <property type="match status" value="1"/>
</dbReference>
<dbReference type="Pfam" id="PF00016">
    <property type="entry name" value="RuBisCO_large"/>
    <property type="match status" value="1"/>
</dbReference>
<dbReference type="Pfam" id="PF02788">
    <property type="entry name" value="RuBisCO_large_N"/>
    <property type="match status" value="1"/>
</dbReference>
<dbReference type="SFLD" id="SFLDG01052">
    <property type="entry name" value="RuBisCO"/>
    <property type="match status" value="1"/>
</dbReference>
<dbReference type="SFLD" id="SFLDS00014">
    <property type="entry name" value="RuBisCO"/>
    <property type="match status" value="1"/>
</dbReference>
<dbReference type="SFLD" id="SFLDG00301">
    <property type="entry name" value="RuBisCO-like_proteins"/>
    <property type="match status" value="1"/>
</dbReference>
<dbReference type="SUPFAM" id="SSF51649">
    <property type="entry name" value="RuBisCo, C-terminal domain"/>
    <property type="match status" value="1"/>
</dbReference>
<dbReference type="SUPFAM" id="SSF54966">
    <property type="entry name" value="RuBisCO, large subunit, small (N-terminal) domain"/>
    <property type="match status" value="1"/>
</dbReference>
<dbReference type="PROSITE" id="PS00157">
    <property type="entry name" value="RUBISCO_LARGE"/>
    <property type="match status" value="1"/>
</dbReference>
<proteinExistence type="inferred from homology"/>
<name>RBL_SYNSP</name>
<comment type="function">
    <text>RuBisCO catalyzes two reactions: the carboxylation of D-ribulose 1,5-bisphosphate, the primary event in carbon dioxide fixation, as well as the oxidative fragmentation of the pentose substrate in the photorespiration process. Both reactions occur simultaneously and in competition at the same active site.</text>
</comment>
<comment type="catalytic activity">
    <reaction evidence="1">
        <text>2 (2R)-3-phosphoglycerate + 2 H(+) = D-ribulose 1,5-bisphosphate + CO2 + H2O</text>
        <dbReference type="Rhea" id="RHEA:23124"/>
        <dbReference type="ChEBI" id="CHEBI:15377"/>
        <dbReference type="ChEBI" id="CHEBI:15378"/>
        <dbReference type="ChEBI" id="CHEBI:16526"/>
        <dbReference type="ChEBI" id="CHEBI:57870"/>
        <dbReference type="ChEBI" id="CHEBI:58272"/>
        <dbReference type="EC" id="4.1.1.39"/>
    </reaction>
</comment>
<comment type="catalytic activity">
    <reaction evidence="1">
        <text>D-ribulose 1,5-bisphosphate + O2 = 2-phosphoglycolate + (2R)-3-phosphoglycerate + 2 H(+)</text>
        <dbReference type="Rhea" id="RHEA:36631"/>
        <dbReference type="ChEBI" id="CHEBI:15378"/>
        <dbReference type="ChEBI" id="CHEBI:15379"/>
        <dbReference type="ChEBI" id="CHEBI:57870"/>
        <dbReference type="ChEBI" id="CHEBI:58033"/>
        <dbReference type="ChEBI" id="CHEBI:58272"/>
    </reaction>
</comment>
<comment type="cofactor">
    <cofactor evidence="1">
        <name>Mg(2+)</name>
        <dbReference type="ChEBI" id="CHEBI:18420"/>
    </cofactor>
    <text evidence="1">Binds 1 Mg(2+) ion per subunit.</text>
</comment>
<comment type="subunit">
    <text evidence="2">Heterohexadecamer of 8 large chains and 8 small chains; disulfide-linked. The disulfide link is formed within the large subunit homodimers (Probable).</text>
</comment>
<comment type="subcellular location">
    <subcellularLocation>
        <location evidence="1">Carboxysome</location>
    </subcellularLocation>
</comment>
<comment type="PTM">
    <text evidence="1">The disulfide bond which can form in the large chain dimeric partners within the hexadecamer appears to be associated with oxidative stress and protein turnover.</text>
</comment>
<comment type="miscellaneous">
    <text evidence="1">The basic functional RuBisCO is composed of a large chain homodimer in a 'head-to-tail' conformation. In form I RuBisCO this homodimer is arranged in a barrel-like tetramer with the small subunits forming a tetrameric 'cap' on each end of the 'barrel'.</text>
</comment>
<comment type="similarity">
    <text evidence="1">Belongs to the RuBisCO large chain family. Type I subfamily.</text>
</comment>